<evidence type="ECO:0000250" key="1">
    <source>
        <dbReference type="UniProtKB" id="P32241"/>
    </source>
</evidence>
<evidence type="ECO:0000255" key="2"/>
<evidence type="ECO:0000303" key="3">
    <source>
    </source>
</evidence>
<evidence type="ECO:0000303" key="4">
    <source>
    </source>
</evidence>
<evidence type="ECO:0000305" key="5"/>
<evidence type="ECO:0000312" key="6">
    <source>
        <dbReference type="MGI" id="MGI:109272"/>
    </source>
</evidence>
<dbReference type="EMBL" id="AB022860">
    <property type="protein sequence ID" value="BAA81896.1"/>
    <property type="molecule type" value="Genomic_DNA"/>
</dbReference>
<dbReference type="EMBL" id="AF266282">
    <property type="protein sequence ID" value="AAF77053.1"/>
    <property type="molecule type" value="mRNA"/>
</dbReference>
<dbReference type="EMBL" id="AK052465">
    <property type="protein sequence ID" value="BAC35004.1"/>
    <property type="molecule type" value="mRNA"/>
</dbReference>
<dbReference type="EMBL" id="S82970">
    <property type="protein sequence ID" value="AAN86759.1"/>
    <property type="molecule type" value="Genomic_DNA"/>
</dbReference>
<dbReference type="CCDS" id="CCDS23633.1"/>
<dbReference type="RefSeq" id="NP_035833.2">
    <property type="nucleotide sequence ID" value="NM_011703.4"/>
</dbReference>
<dbReference type="SMR" id="P97751"/>
<dbReference type="BioGRID" id="204526">
    <property type="interactions" value="3"/>
</dbReference>
<dbReference type="FunCoup" id="P97751">
    <property type="interactions" value="439"/>
</dbReference>
<dbReference type="STRING" id="10090.ENSMUSP00000035115"/>
<dbReference type="GlyCosmos" id="P97751">
    <property type="glycosylation" value="5 sites, No reported glycans"/>
</dbReference>
<dbReference type="GlyGen" id="P97751">
    <property type="glycosylation" value="5 sites"/>
</dbReference>
<dbReference type="iPTMnet" id="P97751"/>
<dbReference type="PhosphoSitePlus" id="P97751"/>
<dbReference type="PaxDb" id="10090-ENSMUSP00000035115"/>
<dbReference type="ProteomicsDB" id="297575"/>
<dbReference type="Antibodypedia" id="12331">
    <property type="antibodies" value="445 antibodies from 35 providers"/>
</dbReference>
<dbReference type="DNASU" id="22354"/>
<dbReference type="Ensembl" id="ENSMUST00000035115.5">
    <property type="protein sequence ID" value="ENSMUSP00000035115.5"/>
    <property type="gene ID" value="ENSMUSG00000032528.6"/>
</dbReference>
<dbReference type="GeneID" id="22354"/>
<dbReference type="KEGG" id="mmu:22354"/>
<dbReference type="UCSC" id="uc009sdl.2">
    <property type="organism name" value="mouse"/>
</dbReference>
<dbReference type="AGR" id="MGI:109272"/>
<dbReference type="CTD" id="7433"/>
<dbReference type="MGI" id="MGI:109272">
    <property type="gene designation" value="Vipr1"/>
</dbReference>
<dbReference type="VEuPathDB" id="HostDB:ENSMUSG00000032528"/>
<dbReference type="eggNOG" id="KOG4564">
    <property type="taxonomic scope" value="Eukaryota"/>
</dbReference>
<dbReference type="GeneTree" id="ENSGT00940000156402"/>
<dbReference type="HOGENOM" id="CLU_002753_4_4_1"/>
<dbReference type="InParanoid" id="P97751"/>
<dbReference type="OMA" id="SKSQHPW"/>
<dbReference type="OrthoDB" id="5967113at2759"/>
<dbReference type="PhylomeDB" id="P97751"/>
<dbReference type="TreeFam" id="TF315710"/>
<dbReference type="Reactome" id="R-MMU-418555">
    <property type="pathway name" value="G alpha (s) signalling events"/>
</dbReference>
<dbReference type="Reactome" id="R-MMU-420092">
    <property type="pathway name" value="Glucagon-type ligand receptors"/>
</dbReference>
<dbReference type="BioGRID-ORCS" id="22354">
    <property type="hits" value="2 hits in 76 CRISPR screens"/>
</dbReference>
<dbReference type="PRO" id="PR:P97751"/>
<dbReference type="Proteomes" id="UP000000589">
    <property type="component" value="Chromosome 9"/>
</dbReference>
<dbReference type="RNAct" id="P97751">
    <property type="molecule type" value="protein"/>
</dbReference>
<dbReference type="Bgee" id="ENSMUSG00000032528">
    <property type="expression patterns" value="Expressed in small intestine Peyer's patch and 79 other cell types or tissues"/>
</dbReference>
<dbReference type="GO" id="GO:0005886">
    <property type="term" value="C:plasma membrane"/>
    <property type="evidence" value="ECO:0007669"/>
    <property type="project" value="UniProtKB-SubCell"/>
</dbReference>
<dbReference type="GO" id="GO:0043235">
    <property type="term" value="C:receptor complex"/>
    <property type="evidence" value="ECO:0000266"/>
    <property type="project" value="MGI"/>
</dbReference>
<dbReference type="GO" id="GO:0017046">
    <property type="term" value="F:peptide hormone binding"/>
    <property type="evidence" value="ECO:0007669"/>
    <property type="project" value="Ensembl"/>
</dbReference>
<dbReference type="GO" id="GO:0001634">
    <property type="term" value="F:pituitary adenylate cyclase-activating polypeptide receptor activity"/>
    <property type="evidence" value="ECO:0007669"/>
    <property type="project" value="Ensembl"/>
</dbReference>
<dbReference type="GO" id="GO:0004999">
    <property type="term" value="F:vasoactive intestinal polypeptide receptor activity"/>
    <property type="evidence" value="ECO:0000250"/>
    <property type="project" value="UniProtKB"/>
</dbReference>
<dbReference type="GO" id="GO:0007189">
    <property type="term" value="P:adenylate cyclase-activating G protein-coupled receptor signaling pathway"/>
    <property type="evidence" value="ECO:0000250"/>
    <property type="project" value="UniProtKB"/>
</dbReference>
<dbReference type="GO" id="GO:0007166">
    <property type="term" value="P:cell surface receptor signaling pathway"/>
    <property type="evidence" value="ECO:0007669"/>
    <property type="project" value="InterPro"/>
</dbReference>
<dbReference type="GO" id="GO:0007187">
    <property type="term" value="P:G protein-coupled receptor signaling pathway, coupled to cyclic nucleotide second messenger"/>
    <property type="evidence" value="ECO:0007669"/>
    <property type="project" value="Ensembl"/>
</dbReference>
<dbReference type="CDD" id="cd15269">
    <property type="entry name" value="7tmB1_VIP-R1"/>
    <property type="match status" value="1"/>
</dbReference>
<dbReference type="FunFam" id="4.10.1240.10:FF:000016">
    <property type="entry name" value="Vasoactive intestinal peptide receptor 1"/>
    <property type="match status" value="1"/>
</dbReference>
<dbReference type="FunFam" id="1.20.1070.10:FF:000032">
    <property type="entry name" value="Vasoactive intestinal polypeptide receptor 1"/>
    <property type="match status" value="1"/>
</dbReference>
<dbReference type="Gene3D" id="4.10.1240.10">
    <property type="entry name" value="GPCR, family 2, extracellular hormone receptor domain"/>
    <property type="match status" value="1"/>
</dbReference>
<dbReference type="Gene3D" id="1.20.1070.10">
    <property type="entry name" value="Rhodopsin 7-helix transmembrane proteins"/>
    <property type="match status" value="1"/>
</dbReference>
<dbReference type="InterPro" id="IPR050332">
    <property type="entry name" value="GPCR_2"/>
</dbReference>
<dbReference type="InterPro" id="IPR017981">
    <property type="entry name" value="GPCR_2-like_7TM"/>
</dbReference>
<dbReference type="InterPro" id="IPR036445">
    <property type="entry name" value="GPCR_2_extracell_dom_sf"/>
</dbReference>
<dbReference type="InterPro" id="IPR001879">
    <property type="entry name" value="GPCR_2_extracellular_dom"/>
</dbReference>
<dbReference type="InterPro" id="IPR000832">
    <property type="entry name" value="GPCR_2_secretin-like"/>
</dbReference>
<dbReference type="InterPro" id="IPR017983">
    <property type="entry name" value="GPCR_2_secretin-like_CS"/>
</dbReference>
<dbReference type="InterPro" id="IPR001571">
    <property type="entry name" value="GPCR_2_VIP_rcpt"/>
</dbReference>
<dbReference type="InterPro" id="IPR001771">
    <property type="entry name" value="GPCR_2_VIP_rcpt_1"/>
</dbReference>
<dbReference type="PANTHER" id="PTHR45620">
    <property type="entry name" value="PDF RECEPTOR-LIKE PROTEIN-RELATED"/>
    <property type="match status" value="1"/>
</dbReference>
<dbReference type="PANTHER" id="PTHR45620:SF24">
    <property type="entry name" value="VASOACTIVE INTESTINAL POLYPEPTIDE RECEPTOR 1"/>
    <property type="match status" value="1"/>
</dbReference>
<dbReference type="Pfam" id="PF00002">
    <property type="entry name" value="7tm_2"/>
    <property type="match status" value="1"/>
</dbReference>
<dbReference type="Pfam" id="PF02793">
    <property type="entry name" value="HRM"/>
    <property type="match status" value="1"/>
</dbReference>
<dbReference type="PRINTS" id="PR00249">
    <property type="entry name" value="GPCRSECRETIN"/>
</dbReference>
<dbReference type="PRINTS" id="PR00491">
    <property type="entry name" value="VASOACTVEIPR"/>
</dbReference>
<dbReference type="PRINTS" id="PR01154">
    <property type="entry name" value="VIP1RECEPTOR"/>
</dbReference>
<dbReference type="SMART" id="SM00008">
    <property type="entry name" value="HormR"/>
    <property type="match status" value="1"/>
</dbReference>
<dbReference type="SUPFAM" id="SSF81321">
    <property type="entry name" value="Family A G protein-coupled receptor-like"/>
    <property type="match status" value="1"/>
</dbReference>
<dbReference type="SUPFAM" id="SSF111418">
    <property type="entry name" value="Hormone receptor domain"/>
    <property type="match status" value="1"/>
</dbReference>
<dbReference type="PROSITE" id="PS00649">
    <property type="entry name" value="G_PROTEIN_RECEP_F2_1"/>
    <property type="match status" value="1"/>
</dbReference>
<dbReference type="PROSITE" id="PS00650">
    <property type="entry name" value="G_PROTEIN_RECEP_F2_2"/>
    <property type="match status" value="1"/>
</dbReference>
<dbReference type="PROSITE" id="PS50227">
    <property type="entry name" value="G_PROTEIN_RECEP_F2_3"/>
    <property type="match status" value="1"/>
</dbReference>
<dbReference type="PROSITE" id="PS50261">
    <property type="entry name" value="G_PROTEIN_RECEP_F2_4"/>
    <property type="match status" value="1"/>
</dbReference>
<protein>
    <recommendedName>
        <fullName evidence="4">Vasoactive intestinal polypeptide receptor 1</fullName>
        <shortName>VIP-R-1</shortName>
    </recommendedName>
    <alternativeName>
        <fullName>Pituitary adenylate cyclase-activating polypeptide type II receptor</fullName>
        <shortName>PACAP type II receptor</shortName>
        <shortName>PACAP-R-2</shortName>
        <shortName>PACAP-R2</shortName>
    </alternativeName>
    <alternativeName>
        <fullName evidence="3">VPAC1 receptor</fullName>
    </alternativeName>
</protein>
<proteinExistence type="evidence at protein level"/>
<accession>P97751</accession>
<accession>Q9JI40</accession>
<accession>Q9R1T8</accession>
<reference key="1">
    <citation type="journal article" date="1999" name="Genomics">
        <title>Genomic organization and chromosomal location of the mouse vasoactive intestinal polypeptide 1 (VPAC1) receptor.</title>
        <authorList>
            <person name="Hashimoto H."/>
            <person name="Nishino A."/>
            <person name="Shintani N."/>
            <person name="Hagihara N."/>
            <person name="Copeland N.G."/>
            <person name="Jenkins N.A."/>
            <person name="Yamamoto K."/>
            <person name="Matsuda T."/>
            <person name="Ishihara T."/>
            <person name="Nagata S."/>
            <person name="Baba A."/>
        </authorList>
    </citation>
    <scope>NUCLEOTIDE SEQUENCE [GENOMIC DNA]</scope>
    <source>
        <strain>129/SvJ</strain>
    </source>
</reference>
<reference key="2">
    <citation type="submission" date="2000-05" db="EMBL/GenBank/DDBJ databases">
        <title>Cloning and fine mapping of the vasoactive intestinal peptide receptor I (VPAC1): a comparative analysis of human, rat and murine genes.</title>
        <authorList>
            <person name="Karacay B."/>
            <person name="O'Dorisio M.S."/>
            <person name="Kasow K."/>
            <person name="Krahe R."/>
        </authorList>
    </citation>
    <scope>NUCLEOTIDE SEQUENCE</scope>
    <source>
        <strain>FVB/N</strain>
    </source>
</reference>
<reference key="3">
    <citation type="journal article" date="2005" name="Science">
        <title>The transcriptional landscape of the mammalian genome.</title>
        <authorList>
            <person name="Carninci P."/>
            <person name="Kasukawa T."/>
            <person name="Katayama S."/>
            <person name="Gough J."/>
            <person name="Frith M.C."/>
            <person name="Maeda N."/>
            <person name="Oyama R."/>
            <person name="Ravasi T."/>
            <person name="Lenhard B."/>
            <person name="Wells C."/>
            <person name="Kodzius R."/>
            <person name="Shimokawa K."/>
            <person name="Bajic V.B."/>
            <person name="Brenner S.E."/>
            <person name="Batalov S."/>
            <person name="Forrest A.R."/>
            <person name="Zavolan M."/>
            <person name="Davis M.J."/>
            <person name="Wilming L.G."/>
            <person name="Aidinis V."/>
            <person name="Allen J.E."/>
            <person name="Ambesi-Impiombato A."/>
            <person name="Apweiler R."/>
            <person name="Aturaliya R.N."/>
            <person name="Bailey T.L."/>
            <person name="Bansal M."/>
            <person name="Baxter L."/>
            <person name="Beisel K.W."/>
            <person name="Bersano T."/>
            <person name="Bono H."/>
            <person name="Chalk A.M."/>
            <person name="Chiu K.P."/>
            <person name="Choudhary V."/>
            <person name="Christoffels A."/>
            <person name="Clutterbuck D.R."/>
            <person name="Crowe M.L."/>
            <person name="Dalla E."/>
            <person name="Dalrymple B.P."/>
            <person name="de Bono B."/>
            <person name="Della Gatta G."/>
            <person name="di Bernardo D."/>
            <person name="Down T."/>
            <person name="Engstrom P."/>
            <person name="Fagiolini M."/>
            <person name="Faulkner G."/>
            <person name="Fletcher C.F."/>
            <person name="Fukushima T."/>
            <person name="Furuno M."/>
            <person name="Futaki S."/>
            <person name="Gariboldi M."/>
            <person name="Georgii-Hemming P."/>
            <person name="Gingeras T.R."/>
            <person name="Gojobori T."/>
            <person name="Green R.E."/>
            <person name="Gustincich S."/>
            <person name="Harbers M."/>
            <person name="Hayashi Y."/>
            <person name="Hensch T.K."/>
            <person name="Hirokawa N."/>
            <person name="Hill D."/>
            <person name="Huminiecki L."/>
            <person name="Iacono M."/>
            <person name="Ikeo K."/>
            <person name="Iwama A."/>
            <person name="Ishikawa T."/>
            <person name="Jakt M."/>
            <person name="Kanapin A."/>
            <person name="Katoh M."/>
            <person name="Kawasawa Y."/>
            <person name="Kelso J."/>
            <person name="Kitamura H."/>
            <person name="Kitano H."/>
            <person name="Kollias G."/>
            <person name="Krishnan S.P."/>
            <person name="Kruger A."/>
            <person name="Kummerfeld S.K."/>
            <person name="Kurochkin I.V."/>
            <person name="Lareau L.F."/>
            <person name="Lazarevic D."/>
            <person name="Lipovich L."/>
            <person name="Liu J."/>
            <person name="Liuni S."/>
            <person name="McWilliam S."/>
            <person name="Madan Babu M."/>
            <person name="Madera M."/>
            <person name="Marchionni L."/>
            <person name="Matsuda H."/>
            <person name="Matsuzawa S."/>
            <person name="Miki H."/>
            <person name="Mignone F."/>
            <person name="Miyake S."/>
            <person name="Morris K."/>
            <person name="Mottagui-Tabar S."/>
            <person name="Mulder N."/>
            <person name="Nakano N."/>
            <person name="Nakauchi H."/>
            <person name="Ng P."/>
            <person name="Nilsson R."/>
            <person name="Nishiguchi S."/>
            <person name="Nishikawa S."/>
            <person name="Nori F."/>
            <person name="Ohara O."/>
            <person name="Okazaki Y."/>
            <person name="Orlando V."/>
            <person name="Pang K.C."/>
            <person name="Pavan W.J."/>
            <person name="Pavesi G."/>
            <person name="Pesole G."/>
            <person name="Petrovsky N."/>
            <person name="Piazza S."/>
            <person name="Reed J."/>
            <person name="Reid J.F."/>
            <person name="Ring B.Z."/>
            <person name="Ringwald M."/>
            <person name="Rost B."/>
            <person name="Ruan Y."/>
            <person name="Salzberg S.L."/>
            <person name="Sandelin A."/>
            <person name="Schneider C."/>
            <person name="Schoenbach C."/>
            <person name="Sekiguchi K."/>
            <person name="Semple C.A."/>
            <person name="Seno S."/>
            <person name="Sessa L."/>
            <person name="Sheng Y."/>
            <person name="Shibata Y."/>
            <person name="Shimada H."/>
            <person name="Shimada K."/>
            <person name="Silva D."/>
            <person name="Sinclair B."/>
            <person name="Sperling S."/>
            <person name="Stupka E."/>
            <person name="Sugiura K."/>
            <person name="Sultana R."/>
            <person name="Takenaka Y."/>
            <person name="Taki K."/>
            <person name="Tammoja K."/>
            <person name="Tan S.L."/>
            <person name="Tang S."/>
            <person name="Taylor M.S."/>
            <person name="Tegner J."/>
            <person name="Teichmann S.A."/>
            <person name="Ueda H.R."/>
            <person name="van Nimwegen E."/>
            <person name="Verardo R."/>
            <person name="Wei C.L."/>
            <person name="Yagi K."/>
            <person name="Yamanishi H."/>
            <person name="Zabarovsky E."/>
            <person name="Zhu S."/>
            <person name="Zimmer A."/>
            <person name="Hide W."/>
            <person name="Bult C."/>
            <person name="Grimmond S.M."/>
            <person name="Teasdale R.D."/>
            <person name="Liu E.T."/>
            <person name="Brusic V."/>
            <person name="Quackenbush J."/>
            <person name="Wahlestedt C."/>
            <person name="Mattick J.S."/>
            <person name="Hume D.A."/>
            <person name="Kai C."/>
            <person name="Sasaki D."/>
            <person name="Tomaru Y."/>
            <person name="Fukuda S."/>
            <person name="Kanamori-Katayama M."/>
            <person name="Suzuki M."/>
            <person name="Aoki J."/>
            <person name="Arakawa T."/>
            <person name="Iida J."/>
            <person name="Imamura K."/>
            <person name="Itoh M."/>
            <person name="Kato T."/>
            <person name="Kawaji H."/>
            <person name="Kawagashira N."/>
            <person name="Kawashima T."/>
            <person name="Kojima M."/>
            <person name="Kondo S."/>
            <person name="Konno H."/>
            <person name="Nakano K."/>
            <person name="Ninomiya N."/>
            <person name="Nishio T."/>
            <person name="Okada M."/>
            <person name="Plessy C."/>
            <person name="Shibata K."/>
            <person name="Shiraki T."/>
            <person name="Suzuki S."/>
            <person name="Tagami M."/>
            <person name="Waki K."/>
            <person name="Watahiki A."/>
            <person name="Okamura-Oho Y."/>
            <person name="Suzuki H."/>
            <person name="Kawai J."/>
            <person name="Hayashizaki Y."/>
        </authorList>
    </citation>
    <scope>NUCLEOTIDE SEQUENCE [LARGE SCALE MRNA]</scope>
    <source>
        <strain>C57BL/6J</strain>
        <tissue>Lung</tissue>
    </source>
</reference>
<reference key="4">
    <citation type="journal article" date="1996" name="J. Neuroimmunol.">
        <title>Murine T-lymphocytes express vasoactive intestinal peptide receptor 1 (VIP-R1) mRNA.</title>
        <authorList>
            <person name="Johnson M.C."/>
            <person name="McCormack R.J."/>
            <person name="Delgado M."/>
            <person name="Martinez C."/>
            <person name="Ganea D."/>
        </authorList>
    </citation>
    <scope>NUCLEOTIDE SEQUENCE [GENOMIC DNA] OF 249-398</scope>
    <source>
        <strain>BALB/cJ</strain>
        <tissue>Thymus</tissue>
    </source>
</reference>
<reference key="5">
    <citation type="journal article" date="2007" name="Proc. Natl. Acad. Sci. U.S.A.">
        <title>Large-scale phosphorylation analysis of mouse liver.</title>
        <authorList>
            <person name="Villen J."/>
            <person name="Beausoleil S.A."/>
            <person name="Gerber S.A."/>
            <person name="Gygi S.P."/>
        </authorList>
    </citation>
    <scope>IDENTIFICATION BY MASS SPECTROMETRY [LARGE SCALE ANALYSIS]</scope>
    <source>
        <tissue>Liver</tissue>
    </source>
</reference>
<reference key="6">
    <citation type="journal article" date="2010" name="Cell">
        <title>A tissue-specific atlas of mouse protein phosphorylation and expression.</title>
        <authorList>
            <person name="Huttlin E.L."/>
            <person name="Jedrychowski M.P."/>
            <person name="Elias J.E."/>
            <person name="Goswami T."/>
            <person name="Rad R."/>
            <person name="Beausoleil S.A."/>
            <person name="Villen J."/>
            <person name="Haas W."/>
            <person name="Sowa M.E."/>
            <person name="Gygi S.P."/>
        </authorList>
    </citation>
    <scope>IDENTIFICATION BY MASS SPECTROMETRY [LARGE SCALE ANALYSIS]</scope>
    <source>
        <tissue>Kidney</tissue>
        <tissue>Liver</tissue>
    </source>
</reference>
<name>VIPR1_MOUSE</name>
<feature type="signal peptide" evidence="2">
    <location>
        <begin position="1"/>
        <end position="30"/>
    </location>
</feature>
<feature type="chain" id="PRO_0000012856" description="Vasoactive intestinal polypeptide receptor 1">
    <location>
        <begin position="31"/>
        <end position="459"/>
    </location>
</feature>
<feature type="topological domain" description="Extracellular" evidence="5">
    <location>
        <begin position="31"/>
        <end position="142"/>
    </location>
</feature>
<feature type="transmembrane region" description="Helical; Name=1" evidence="1">
    <location>
        <begin position="143"/>
        <end position="167"/>
    </location>
</feature>
<feature type="topological domain" description="Cytoplasmic" evidence="5">
    <location>
        <begin position="168"/>
        <end position="175"/>
    </location>
</feature>
<feature type="transmembrane region" description="Helical; Name=2" evidence="1">
    <location>
        <begin position="176"/>
        <end position="197"/>
    </location>
</feature>
<feature type="topological domain" description="Extracellular" evidence="5">
    <location>
        <begin position="198"/>
        <end position="217"/>
    </location>
</feature>
<feature type="transmembrane region" description="Helical; Name=3" evidence="1">
    <location>
        <begin position="218"/>
        <end position="242"/>
    </location>
</feature>
<feature type="topological domain" description="Cytoplasmic" evidence="5">
    <location>
        <begin position="243"/>
        <end position="255"/>
    </location>
</feature>
<feature type="transmembrane region" description="Helical; Name=4" evidence="1">
    <location>
        <begin position="256"/>
        <end position="277"/>
    </location>
</feature>
<feature type="topological domain" description="Extracellular" evidence="5">
    <location>
        <begin position="278"/>
        <end position="293"/>
    </location>
</feature>
<feature type="transmembrane region" description="Helical; Name=5" evidence="1">
    <location>
        <begin position="294"/>
        <end position="318"/>
    </location>
</feature>
<feature type="topological domain" description="Cytoplasmic" evidence="5">
    <location>
        <begin position="319"/>
        <end position="340"/>
    </location>
</feature>
<feature type="transmembrane region" description="Helical; Name=6" evidence="1">
    <location>
        <begin position="341"/>
        <end position="361"/>
    </location>
</feature>
<feature type="topological domain" description="Extracellular" evidence="5">
    <location>
        <begin position="362"/>
        <end position="369"/>
    </location>
</feature>
<feature type="transmembrane region" description="Helical; Name=7" evidence="1">
    <location>
        <begin position="370"/>
        <end position="393"/>
    </location>
</feature>
<feature type="topological domain" description="Cytoplasmic" evidence="5">
    <location>
        <begin position="394"/>
        <end position="459"/>
    </location>
</feature>
<feature type="glycosylation site" description="N-linked (GlcNAc...) asparagine" evidence="2">
    <location>
        <position position="58"/>
    </location>
</feature>
<feature type="glycosylation site" description="N-linked (GlcNAc...) asparagine" evidence="2">
    <location>
        <position position="69"/>
    </location>
</feature>
<feature type="glycosylation site" description="N-linked (GlcNAc...) asparagine" evidence="2">
    <location>
        <position position="100"/>
    </location>
</feature>
<feature type="glycosylation site" description="N-linked (GlcNAc...) asparagine" evidence="2">
    <location>
        <position position="104"/>
    </location>
</feature>
<feature type="glycosylation site" description="N-linked (GlcNAc...) asparagine" evidence="2">
    <location>
        <position position="292"/>
    </location>
</feature>
<feature type="disulfide bond" evidence="1">
    <location>
        <begin position="37"/>
        <end position="209"/>
    </location>
</feature>
<feature type="disulfide bond" evidence="1">
    <location>
        <begin position="50"/>
        <end position="72"/>
    </location>
</feature>
<feature type="disulfide bond" evidence="1">
    <location>
        <begin position="63"/>
        <end position="105"/>
    </location>
</feature>
<feature type="disulfide bond" evidence="1">
    <location>
        <begin position="86"/>
        <end position="122"/>
    </location>
</feature>
<feature type="disulfide bond" evidence="1">
    <location>
        <begin position="216"/>
        <end position="286"/>
    </location>
</feature>
<feature type="sequence conflict" description="In Ref. 1; BAA81896." evidence="5" ref="1">
    <original>E</original>
    <variation>K</variation>
    <location>
        <position position="59"/>
    </location>
</feature>
<comment type="function">
    <text evidence="1">G protein-coupled receptor activated by the neuropeptides vasoactive intestinal peptide (VIP) and pituitary adenylate cyclase-activating polypeptide (ADCYAP1/PACAP). Binds VIP and both PACAP27 and PACAP38 bioactive peptides with the following order of ligand affinity VIP = PACAP27 &gt; PACAP38. Ligand binding causes a conformation change that triggers signaling via guanine nucleotide-binding proteins (G proteins) and modulates the activity of downstream effectors. Activates cAMP-dependent pathway.</text>
</comment>
<comment type="subunit">
    <text evidence="1">Interacts with ADCYAP1/PACAP; activated by both PACAP27 and PACAP38 neuropeptides. Interacts with VIP; the interaction results in VIPR1 activation.</text>
</comment>
<comment type="subcellular location">
    <subcellularLocation>
        <location evidence="1">Cell membrane</location>
        <topology evidence="1">Multi-pass membrane protein</topology>
    </subcellularLocation>
</comment>
<comment type="similarity">
    <text evidence="5">Belongs to the G-protein coupled receptor 2 family.</text>
</comment>
<organism>
    <name type="scientific">Mus musculus</name>
    <name type="common">Mouse</name>
    <dbReference type="NCBI Taxonomy" id="10090"/>
    <lineage>
        <taxon>Eukaryota</taxon>
        <taxon>Metazoa</taxon>
        <taxon>Chordata</taxon>
        <taxon>Craniata</taxon>
        <taxon>Vertebrata</taxon>
        <taxon>Euteleostomi</taxon>
        <taxon>Mammalia</taxon>
        <taxon>Eutheria</taxon>
        <taxon>Euarchontoglires</taxon>
        <taxon>Glires</taxon>
        <taxon>Rodentia</taxon>
        <taxon>Myomorpha</taxon>
        <taxon>Muroidea</taxon>
        <taxon>Muridae</taxon>
        <taxon>Murinae</taxon>
        <taxon>Mus</taxon>
        <taxon>Mus</taxon>
    </lineage>
</organism>
<sequence length="459" mass="52096">MRPPSLPPARWLCVLAGALACALGPAGSRAASPHQECEYLQMIEKQRQQCLEEAQLENETTGCSKMWDNLTCWPTTPWGQVVVLDCPLIFQLFSPIHGYNISRNCTEEGWSQLEPGPYHIACGLNDRASSMDEQQQTEFYDAVKTGYTIGYSLSLASLLVAMAILSLFRKLHCTRNYIHMHLFMSFILRATAVFIKDMALFNNGETDHCSEASVSCKAAVVFFQYCVMANFFWLLVEGLYLHTLLAVSFFSERKYFWGYILIGWGVPSVFIMIWTIVRIHFEDFGCWDTIINSSLWWIIKGPILISILVNFILFICIIRILVQKLRPPDIGKNDSSPYSRLAKSTLLLIPLFGVHYVMFAFFPDNFKAQVKMVFELVVGSFQGFVVAILYCFLNGEVQAELRRKWRRWHLQGVLGWSSKSQHPWGGSNGVSCSTQVSMLTRVSPSARRSSSFQAEVSLV</sequence>
<gene>
    <name evidence="6" type="primary">Vipr1</name>
</gene>
<keyword id="KW-1003">Cell membrane</keyword>
<keyword id="KW-1015">Disulfide bond</keyword>
<keyword id="KW-0297">G-protein coupled receptor</keyword>
<keyword id="KW-0325">Glycoprotein</keyword>
<keyword id="KW-0472">Membrane</keyword>
<keyword id="KW-0675">Receptor</keyword>
<keyword id="KW-1185">Reference proteome</keyword>
<keyword id="KW-0732">Signal</keyword>
<keyword id="KW-0807">Transducer</keyword>
<keyword id="KW-0812">Transmembrane</keyword>
<keyword id="KW-1133">Transmembrane helix</keyword>